<name>FBK30_ARATH</name>
<accession>Q9M8L2</accession>
<accession>Q8LBH0</accession>
<proteinExistence type="evidence at transcript level"/>
<reference key="1">
    <citation type="journal article" date="2000" name="Nature">
        <title>Sequence and analysis of chromosome 1 of the plant Arabidopsis thaliana.</title>
        <authorList>
            <person name="Theologis A."/>
            <person name="Ecker J.R."/>
            <person name="Palm C.J."/>
            <person name="Federspiel N.A."/>
            <person name="Kaul S."/>
            <person name="White O."/>
            <person name="Alonso J."/>
            <person name="Altafi H."/>
            <person name="Araujo R."/>
            <person name="Bowman C.L."/>
            <person name="Brooks S.Y."/>
            <person name="Buehler E."/>
            <person name="Chan A."/>
            <person name="Chao Q."/>
            <person name="Chen H."/>
            <person name="Cheuk R.F."/>
            <person name="Chin C.W."/>
            <person name="Chung M.K."/>
            <person name="Conn L."/>
            <person name="Conway A.B."/>
            <person name="Conway A.R."/>
            <person name="Creasy T.H."/>
            <person name="Dewar K."/>
            <person name="Dunn P."/>
            <person name="Etgu P."/>
            <person name="Feldblyum T.V."/>
            <person name="Feng J.-D."/>
            <person name="Fong B."/>
            <person name="Fujii C.Y."/>
            <person name="Gill J.E."/>
            <person name="Goldsmith A.D."/>
            <person name="Haas B."/>
            <person name="Hansen N.F."/>
            <person name="Hughes B."/>
            <person name="Huizar L."/>
            <person name="Hunter J.L."/>
            <person name="Jenkins J."/>
            <person name="Johnson-Hopson C."/>
            <person name="Khan S."/>
            <person name="Khaykin E."/>
            <person name="Kim C.J."/>
            <person name="Koo H.L."/>
            <person name="Kremenetskaia I."/>
            <person name="Kurtz D.B."/>
            <person name="Kwan A."/>
            <person name="Lam B."/>
            <person name="Langin-Hooper S."/>
            <person name="Lee A."/>
            <person name="Lee J.M."/>
            <person name="Lenz C.A."/>
            <person name="Li J.H."/>
            <person name="Li Y.-P."/>
            <person name="Lin X."/>
            <person name="Liu S.X."/>
            <person name="Liu Z.A."/>
            <person name="Luros J.S."/>
            <person name="Maiti R."/>
            <person name="Marziali A."/>
            <person name="Militscher J."/>
            <person name="Miranda M."/>
            <person name="Nguyen M."/>
            <person name="Nierman W.C."/>
            <person name="Osborne B.I."/>
            <person name="Pai G."/>
            <person name="Peterson J."/>
            <person name="Pham P.K."/>
            <person name="Rizzo M."/>
            <person name="Rooney T."/>
            <person name="Rowley D."/>
            <person name="Sakano H."/>
            <person name="Salzberg S.L."/>
            <person name="Schwartz J.R."/>
            <person name="Shinn P."/>
            <person name="Southwick A.M."/>
            <person name="Sun H."/>
            <person name="Tallon L.J."/>
            <person name="Tambunga G."/>
            <person name="Toriumi M.J."/>
            <person name="Town C.D."/>
            <person name="Utterback T."/>
            <person name="Van Aken S."/>
            <person name="Vaysberg M."/>
            <person name="Vysotskaia V.S."/>
            <person name="Walker M."/>
            <person name="Wu D."/>
            <person name="Yu G."/>
            <person name="Fraser C.M."/>
            <person name="Venter J.C."/>
            <person name="Davis R.W."/>
        </authorList>
    </citation>
    <scope>NUCLEOTIDE SEQUENCE [LARGE SCALE GENOMIC DNA]</scope>
    <source>
        <strain>cv. Columbia</strain>
    </source>
</reference>
<reference key="2">
    <citation type="journal article" date="2017" name="Plant J.">
        <title>Araport11: a complete reannotation of the Arabidopsis thaliana reference genome.</title>
        <authorList>
            <person name="Cheng C.Y."/>
            <person name="Krishnakumar V."/>
            <person name="Chan A.P."/>
            <person name="Thibaud-Nissen F."/>
            <person name="Schobel S."/>
            <person name="Town C.D."/>
        </authorList>
    </citation>
    <scope>GENOME REANNOTATION</scope>
    <source>
        <strain>cv. Columbia</strain>
    </source>
</reference>
<reference key="3">
    <citation type="journal article" date="2003" name="Science">
        <title>Empirical analysis of transcriptional activity in the Arabidopsis genome.</title>
        <authorList>
            <person name="Yamada K."/>
            <person name="Lim J."/>
            <person name="Dale J.M."/>
            <person name="Chen H."/>
            <person name="Shinn P."/>
            <person name="Palm C.J."/>
            <person name="Southwick A.M."/>
            <person name="Wu H.C."/>
            <person name="Kim C.J."/>
            <person name="Nguyen M."/>
            <person name="Pham P.K."/>
            <person name="Cheuk R.F."/>
            <person name="Karlin-Newmann G."/>
            <person name="Liu S.X."/>
            <person name="Lam B."/>
            <person name="Sakano H."/>
            <person name="Wu T."/>
            <person name="Yu G."/>
            <person name="Miranda M."/>
            <person name="Quach H.L."/>
            <person name="Tripp M."/>
            <person name="Chang C.H."/>
            <person name="Lee J.M."/>
            <person name="Toriumi M.J."/>
            <person name="Chan M.M."/>
            <person name="Tang C.C."/>
            <person name="Onodera C.S."/>
            <person name="Deng J.M."/>
            <person name="Akiyama K."/>
            <person name="Ansari Y."/>
            <person name="Arakawa T."/>
            <person name="Banh J."/>
            <person name="Banno F."/>
            <person name="Bowser L."/>
            <person name="Brooks S.Y."/>
            <person name="Carninci P."/>
            <person name="Chao Q."/>
            <person name="Choy N."/>
            <person name="Enju A."/>
            <person name="Goldsmith A.D."/>
            <person name="Gurjal M."/>
            <person name="Hansen N.F."/>
            <person name="Hayashizaki Y."/>
            <person name="Johnson-Hopson C."/>
            <person name="Hsuan V.W."/>
            <person name="Iida K."/>
            <person name="Karnes M."/>
            <person name="Khan S."/>
            <person name="Koesema E."/>
            <person name="Ishida J."/>
            <person name="Jiang P.X."/>
            <person name="Jones T."/>
            <person name="Kawai J."/>
            <person name="Kamiya A."/>
            <person name="Meyers C."/>
            <person name="Nakajima M."/>
            <person name="Narusaka M."/>
            <person name="Seki M."/>
            <person name="Sakurai T."/>
            <person name="Satou M."/>
            <person name="Tamse R."/>
            <person name="Vaysberg M."/>
            <person name="Wallender E.K."/>
            <person name="Wong C."/>
            <person name="Yamamura Y."/>
            <person name="Yuan S."/>
            <person name="Shinozaki K."/>
            <person name="Davis R.W."/>
            <person name="Theologis A."/>
            <person name="Ecker J.R."/>
        </authorList>
    </citation>
    <scope>NUCLEOTIDE SEQUENCE [LARGE SCALE MRNA]</scope>
    <source>
        <strain>cv. Columbia</strain>
    </source>
</reference>
<reference key="4">
    <citation type="submission" date="2002-03" db="EMBL/GenBank/DDBJ databases">
        <title>Full-length cDNA from Arabidopsis thaliana.</title>
        <authorList>
            <person name="Brover V.V."/>
            <person name="Troukhan M.E."/>
            <person name="Alexandrov N.A."/>
            <person name="Lu Y.-P."/>
            <person name="Flavell R.B."/>
            <person name="Feldmann K.A."/>
        </authorList>
    </citation>
    <scope>NUCLEOTIDE SEQUENCE [LARGE SCALE MRNA]</scope>
</reference>
<organism>
    <name type="scientific">Arabidopsis thaliana</name>
    <name type="common">Mouse-ear cress</name>
    <dbReference type="NCBI Taxonomy" id="3702"/>
    <lineage>
        <taxon>Eukaryota</taxon>
        <taxon>Viridiplantae</taxon>
        <taxon>Streptophyta</taxon>
        <taxon>Embryophyta</taxon>
        <taxon>Tracheophyta</taxon>
        <taxon>Spermatophyta</taxon>
        <taxon>Magnoliopsida</taxon>
        <taxon>eudicotyledons</taxon>
        <taxon>Gunneridae</taxon>
        <taxon>Pentapetalae</taxon>
        <taxon>rosids</taxon>
        <taxon>malvids</taxon>
        <taxon>Brassicales</taxon>
        <taxon>Brassicaceae</taxon>
        <taxon>Camelineae</taxon>
        <taxon>Arabidopsis</taxon>
    </lineage>
</organism>
<keyword id="KW-0880">Kelch repeat</keyword>
<keyword id="KW-1185">Reference proteome</keyword>
<keyword id="KW-0677">Repeat</keyword>
<sequence length="354" mass="38813">MELIPNLPDDVARECLLRSSYQQFPVIASVCRAWNREVSLSQFLHQRKASRHSQELLILSQARVDPAGSGKIIATPEYRISVLESGSGLWTELPPIPGQTKGLPLFCRLVSVGSDLIVLGGLDPITWQAHDSVFVFSFLTSKWRVGATMPGVRRSFFGCASDSDRTVLVAGGHNEEKCALTSAMVYDVSEDKWTFLPDMARERDECKAVFHAGRFHVIGGYATEEQGQFSKTAESFDVSTWEWGPLTEDFLDDTGDTVSPPTCVAGGDLYACWGGDVMMFLNDKWQKVGQIPADVYNVTYVAVRPGMLIVIGNGKALAGYGEATVGYICDLSSSRWVKLETHGGHVQAGCFLEV</sequence>
<gene>
    <name type="ordered locus">At1g80440</name>
    <name type="ORF">T21F11.23</name>
</gene>
<evidence type="ECO:0000305" key="1"/>
<protein>
    <recommendedName>
        <fullName>F-box/kelch-repeat protein At1g80440</fullName>
    </recommendedName>
</protein>
<feature type="chain" id="PRO_0000283190" description="F-box/kelch-repeat protein At1g80440">
    <location>
        <begin position="1"/>
        <end position="354"/>
    </location>
</feature>
<feature type="domain" description="F-box">
    <location>
        <begin position="2"/>
        <end position="49"/>
    </location>
</feature>
<feature type="repeat" description="Kelch 1">
    <location>
        <begin position="63"/>
        <end position="110"/>
    </location>
</feature>
<feature type="repeat" description="Kelch 2">
    <location>
        <begin position="115"/>
        <end position="163"/>
    </location>
</feature>
<feature type="repeat" description="Kelch 3">
    <location>
        <begin position="166"/>
        <end position="213"/>
    </location>
</feature>
<feature type="repeat" description="Kelch 4">
    <location>
        <begin position="215"/>
        <end position="263"/>
    </location>
</feature>
<feature type="sequence conflict" description="In Ref. 4; AAM64770." evidence="1" ref="4">
    <original>V</original>
    <variation>A</variation>
    <location>
        <position position="264"/>
    </location>
</feature>
<feature type="sequence conflict" description="In Ref. 4; AAM64770." evidence="1" ref="4">
    <original>M</original>
    <variation>K</variation>
    <location>
        <position position="307"/>
    </location>
</feature>
<dbReference type="EMBL" id="AC018849">
    <property type="protein sequence ID" value="AAF27130.1"/>
    <property type="molecule type" value="Genomic_DNA"/>
</dbReference>
<dbReference type="EMBL" id="CP002684">
    <property type="protein sequence ID" value="AEE36405.1"/>
    <property type="molecule type" value="Genomic_DNA"/>
</dbReference>
<dbReference type="EMBL" id="AY065227">
    <property type="protein sequence ID" value="AAL38703.1"/>
    <property type="molecule type" value="mRNA"/>
</dbReference>
<dbReference type="EMBL" id="AY117221">
    <property type="protein sequence ID" value="AAM51296.1"/>
    <property type="molecule type" value="mRNA"/>
</dbReference>
<dbReference type="EMBL" id="AY087214">
    <property type="protein sequence ID" value="AAM64770.1"/>
    <property type="molecule type" value="mRNA"/>
</dbReference>
<dbReference type="PIR" id="B96836">
    <property type="entry name" value="B96836"/>
</dbReference>
<dbReference type="RefSeq" id="NP_565238.1">
    <property type="nucleotide sequence ID" value="NM_106692.4"/>
</dbReference>
<dbReference type="SMR" id="Q9M8L2"/>
<dbReference type="BioGRID" id="29601">
    <property type="interactions" value="6"/>
</dbReference>
<dbReference type="FunCoup" id="Q9M8L2">
    <property type="interactions" value="25"/>
</dbReference>
<dbReference type="STRING" id="3702.Q9M8L2"/>
<dbReference type="PaxDb" id="3702-AT1G80440.1"/>
<dbReference type="ProteomicsDB" id="222426"/>
<dbReference type="EnsemblPlants" id="AT1G80440.1">
    <property type="protein sequence ID" value="AT1G80440.1"/>
    <property type="gene ID" value="AT1G80440"/>
</dbReference>
<dbReference type="GeneID" id="844383"/>
<dbReference type="Gramene" id="AT1G80440.1">
    <property type="protein sequence ID" value="AT1G80440.1"/>
    <property type="gene ID" value="AT1G80440"/>
</dbReference>
<dbReference type="KEGG" id="ath:AT1G80440"/>
<dbReference type="Araport" id="AT1G80440"/>
<dbReference type="TAIR" id="AT1G80440">
    <property type="gene designation" value="KMD1"/>
</dbReference>
<dbReference type="eggNOG" id="KOG1072">
    <property type="taxonomic scope" value="Eukaryota"/>
</dbReference>
<dbReference type="HOGENOM" id="CLU_028510_1_0_1"/>
<dbReference type="InParanoid" id="Q9M8L2"/>
<dbReference type="OMA" id="PANNYRM"/>
<dbReference type="PhylomeDB" id="Q9M8L2"/>
<dbReference type="PRO" id="PR:Q9M8L2"/>
<dbReference type="Proteomes" id="UP000006548">
    <property type="component" value="Chromosome 1"/>
</dbReference>
<dbReference type="ExpressionAtlas" id="Q9M8L2">
    <property type="expression patterns" value="baseline and differential"/>
</dbReference>
<dbReference type="GO" id="GO:0005829">
    <property type="term" value="C:cytosol"/>
    <property type="evidence" value="ECO:0000314"/>
    <property type="project" value="TAIR"/>
</dbReference>
<dbReference type="GO" id="GO:0019005">
    <property type="term" value="C:SCF ubiquitin ligase complex"/>
    <property type="evidence" value="ECO:0000353"/>
    <property type="project" value="TAIR"/>
</dbReference>
<dbReference type="GO" id="GO:0080037">
    <property type="term" value="P:negative regulation of cytokinin-activated signaling pathway"/>
    <property type="evidence" value="ECO:0000316"/>
    <property type="project" value="TAIR"/>
</dbReference>
<dbReference type="GO" id="GO:2000762">
    <property type="term" value="P:regulation of phenylpropanoid metabolic process"/>
    <property type="evidence" value="ECO:0000316"/>
    <property type="project" value="TAIR"/>
</dbReference>
<dbReference type="FunFam" id="2.120.10.80:FF:000199">
    <property type="entry name" value="F-box/kelch-repeat protein SKIP20"/>
    <property type="match status" value="1"/>
</dbReference>
<dbReference type="Gene3D" id="2.120.10.80">
    <property type="entry name" value="Kelch-type beta propeller"/>
    <property type="match status" value="1"/>
</dbReference>
<dbReference type="InterPro" id="IPR036047">
    <property type="entry name" value="F-box-like_dom_sf"/>
</dbReference>
<dbReference type="InterPro" id="IPR001810">
    <property type="entry name" value="F-box_dom"/>
</dbReference>
<dbReference type="InterPro" id="IPR015915">
    <property type="entry name" value="Kelch-typ_b-propeller"/>
</dbReference>
<dbReference type="InterPro" id="IPR006652">
    <property type="entry name" value="Kelch_1"/>
</dbReference>
<dbReference type="InterPro" id="IPR044595">
    <property type="entry name" value="KMD1-4"/>
</dbReference>
<dbReference type="PANTHER" id="PTHR46407">
    <property type="entry name" value="OS02G0208700 PROTEIN"/>
    <property type="match status" value="1"/>
</dbReference>
<dbReference type="PANTHER" id="PTHR46407:SF3">
    <property type="entry name" value="OS02G0208700 PROTEIN"/>
    <property type="match status" value="1"/>
</dbReference>
<dbReference type="Pfam" id="PF00646">
    <property type="entry name" value="F-box"/>
    <property type="match status" value="1"/>
</dbReference>
<dbReference type="Pfam" id="PF01344">
    <property type="entry name" value="Kelch_1"/>
    <property type="match status" value="2"/>
</dbReference>
<dbReference type="SMART" id="SM00612">
    <property type="entry name" value="Kelch"/>
    <property type="match status" value="2"/>
</dbReference>
<dbReference type="SUPFAM" id="SSF81383">
    <property type="entry name" value="F-box domain"/>
    <property type="match status" value="1"/>
</dbReference>
<dbReference type="SUPFAM" id="SSF117281">
    <property type="entry name" value="Kelch motif"/>
    <property type="match status" value="1"/>
</dbReference>